<protein>
    <recommendedName>
        <fullName evidence="1">1-deoxy-D-xylulose 5-phosphate reductoisomerase</fullName>
        <shortName evidence="1">DXP reductoisomerase</shortName>
        <ecNumber evidence="1">1.1.1.267</ecNumber>
    </recommendedName>
    <alternativeName>
        <fullName evidence="1">1-deoxyxylulose-5-phosphate reductoisomerase</fullName>
    </alternativeName>
    <alternativeName>
        <fullName evidence="1">2-C-methyl-D-erythritol 4-phosphate synthase</fullName>
    </alternativeName>
</protein>
<accession>Q3YRZ5</accession>
<name>DXR_EHRCJ</name>
<comment type="function">
    <text evidence="1">Catalyzes the NADPH-dependent rearrangement and reduction of 1-deoxy-D-xylulose-5-phosphate (DXP) to 2-C-methyl-D-erythritol 4-phosphate (MEP).</text>
</comment>
<comment type="catalytic activity">
    <reaction evidence="1">
        <text>2-C-methyl-D-erythritol 4-phosphate + NADP(+) = 1-deoxy-D-xylulose 5-phosphate + NADPH + H(+)</text>
        <dbReference type="Rhea" id="RHEA:13717"/>
        <dbReference type="ChEBI" id="CHEBI:15378"/>
        <dbReference type="ChEBI" id="CHEBI:57783"/>
        <dbReference type="ChEBI" id="CHEBI:57792"/>
        <dbReference type="ChEBI" id="CHEBI:58262"/>
        <dbReference type="ChEBI" id="CHEBI:58349"/>
        <dbReference type="EC" id="1.1.1.267"/>
    </reaction>
    <physiologicalReaction direction="right-to-left" evidence="1">
        <dbReference type="Rhea" id="RHEA:13719"/>
    </physiologicalReaction>
</comment>
<comment type="cofactor">
    <cofactor evidence="1">
        <name>Mg(2+)</name>
        <dbReference type="ChEBI" id="CHEBI:18420"/>
    </cofactor>
    <cofactor evidence="1">
        <name>Mn(2+)</name>
        <dbReference type="ChEBI" id="CHEBI:29035"/>
    </cofactor>
</comment>
<comment type="pathway">
    <text evidence="1">Isoprenoid biosynthesis; isopentenyl diphosphate biosynthesis via DXP pathway; isopentenyl diphosphate from 1-deoxy-D-xylulose 5-phosphate: step 1/6.</text>
</comment>
<comment type="similarity">
    <text evidence="1">Belongs to the DXR family.</text>
</comment>
<dbReference type="EC" id="1.1.1.267" evidence="1"/>
<dbReference type="EMBL" id="CP000107">
    <property type="protein sequence ID" value="AAZ68510.1"/>
    <property type="molecule type" value="Genomic_DNA"/>
</dbReference>
<dbReference type="RefSeq" id="WP_011304588.1">
    <property type="nucleotide sequence ID" value="NC_007354.1"/>
</dbReference>
<dbReference type="SMR" id="Q3YRZ5"/>
<dbReference type="FunCoup" id="Q3YRZ5">
    <property type="interactions" value="213"/>
</dbReference>
<dbReference type="STRING" id="269484.Ecaj_0473"/>
<dbReference type="KEGG" id="ecn:Ecaj_0473"/>
<dbReference type="eggNOG" id="COG0743">
    <property type="taxonomic scope" value="Bacteria"/>
</dbReference>
<dbReference type="HOGENOM" id="CLU_035714_4_0_5"/>
<dbReference type="InParanoid" id="Q3YRZ5"/>
<dbReference type="UniPathway" id="UPA00056">
    <property type="reaction ID" value="UER00092"/>
</dbReference>
<dbReference type="Proteomes" id="UP000000435">
    <property type="component" value="Chromosome"/>
</dbReference>
<dbReference type="GO" id="GO:0030604">
    <property type="term" value="F:1-deoxy-D-xylulose-5-phosphate reductoisomerase activity"/>
    <property type="evidence" value="ECO:0007669"/>
    <property type="project" value="UniProtKB-UniRule"/>
</dbReference>
<dbReference type="GO" id="GO:0030145">
    <property type="term" value="F:manganese ion binding"/>
    <property type="evidence" value="ECO:0007669"/>
    <property type="project" value="TreeGrafter"/>
</dbReference>
<dbReference type="GO" id="GO:0070402">
    <property type="term" value="F:NADPH binding"/>
    <property type="evidence" value="ECO:0007669"/>
    <property type="project" value="InterPro"/>
</dbReference>
<dbReference type="GO" id="GO:0051484">
    <property type="term" value="P:isopentenyl diphosphate biosynthetic process, methylerythritol 4-phosphate pathway involved in terpenoid biosynthetic process"/>
    <property type="evidence" value="ECO:0007669"/>
    <property type="project" value="TreeGrafter"/>
</dbReference>
<dbReference type="Gene3D" id="1.10.1740.10">
    <property type="match status" value="1"/>
</dbReference>
<dbReference type="Gene3D" id="3.40.50.720">
    <property type="entry name" value="NAD(P)-binding Rossmann-like Domain"/>
    <property type="match status" value="1"/>
</dbReference>
<dbReference type="HAMAP" id="MF_00183">
    <property type="entry name" value="DXP_reductoisom"/>
    <property type="match status" value="1"/>
</dbReference>
<dbReference type="InterPro" id="IPR003821">
    <property type="entry name" value="DXP_reductoisomerase"/>
</dbReference>
<dbReference type="InterPro" id="IPR013644">
    <property type="entry name" value="DXP_reductoisomerase_C"/>
</dbReference>
<dbReference type="InterPro" id="IPR013512">
    <property type="entry name" value="DXP_reductoisomerase_N"/>
</dbReference>
<dbReference type="InterPro" id="IPR026877">
    <property type="entry name" value="DXPR_C"/>
</dbReference>
<dbReference type="InterPro" id="IPR036169">
    <property type="entry name" value="DXPR_C_sf"/>
</dbReference>
<dbReference type="InterPro" id="IPR036291">
    <property type="entry name" value="NAD(P)-bd_dom_sf"/>
</dbReference>
<dbReference type="NCBIfam" id="TIGR00243">
    <property type="entry name" value="Dxr"/>
    <property type="match status" value="1"/>
</dbReference>
<dbReference type="PANTHER" id="PTHR30525">
    <property type="entry name" value="1-DEOXY-D-XYLULOSE 5-PHOSPHATE REDUCTOISOMERASE"/>
    <property type="match status" value="1"/>
</dbReference>
<dbReference type="PANTHER" id="PTHR30525:SF0">
    <property type="entry name" value="1-DEOXY-D-XYLULOSE 5-PHOSPHATE REDUCTOISOMERASE, CHLOROPLASTIC"/>
    <property type="match status" value="1"/>
</dbReference>
<dbReference type="Pfam" id="PF08436">
    <property type="entry name" value="DXP_redisom_C"/>
    <property type="match status" value="1"/>
</dbReference>
<dbReference type="Pfam" id="PF02670">
    <property type="entry name" value="DXP_reductoisom"/>
    <property type="match status" value="1"/>
</dbReference>
<dbReference type="Pfam" id="PF13288">
    <property type="entry name" value="DXPR_C"/>
    <property type="match status" value="1"/>
</dbReference>
<dbReference type="PIRSF" id="PIRSF006205">
    <property type="entry name" value="Dxp_reductismrs"/>
    <property type="match status" value="1"/>
</dbReference>
<dbReference type="SUPFAM" id="SSF69055">
    <property type="entry name" value="1-deoxy-D-xylulose-5-phosphate reductoisomerase, C-terminal domain"/>
    <property type="match status" value="1"/>
</dbReference>
<dbReference type="SUPFAM" id="SSF55347">
    <property type="entry name" value="Glyceraldehyde-3-phosphate dehydrogenase-like, C-terminal domain"/>
    <property type="match status" value="1"/>
</dbReference>
<dbReference type="SUPFAM" id="SSF51735">
    <property type="entry name" value="NAD(P)-binding Rossmann-fold domains"/>
    <property type="match status" value="1"/>
</dbReference>
<sequence>MKTVSVFGSTGAIGQMIIDIIFSELDKYQVKVLVAKSNIQLLAFQAKLVNAERVVITDVNLYRELKDLLLDTNIKVSAGDDGMIMATSLDVDYAMMAIVGIAALVPMTYLINSNVKVIALANKESIVCGGALLLSLAKEKDVKIIPLDSEHNAIYQILADKGHKDLEKITLTASGGPLLSMDYEQMKYVTVQDTVKHPVWKMGKKISVDSATMINKSLEIIEAYYLFSIKAEKLDVIIHNESVVHGIISYIDGTSIAFMSVPDMKIPIMYSLSWPNRSAALCKKLNLALYNQLTFMKPDIYKFPGIKLGFEVLKTSNVHANGIILNAANEIAVNAFLAKKIGFLDIVNIVYETLNLVNYGRINSLSNILDCDAISRKVASSTIDKLC</sequence>
<gene>
    <name evidence="1" type="primary">dxr</name>
    <name type="ordered locus">Ecaj_0473</name>
</gene>
<proteinExistence type="inferred from homology"/>
<reference key="1">
    <citation type="journal article" date="2006" name="J. Bacteriol.">
        <title>The genome of the obligately intracellular bacterium Ehrlichia canis reveals themes of complex membrane structure and immune evasion strategies.</title>
        <authorList>
            <person name="Mavromatis K."/>
            <person name="Doyle C.K."/>
            <person name="Lykidis A."/>
            <person name="Ivanova N."/>
            <person name="Francino M.P."/>
            <person name="Chain P."/>
            <person name="Shin M."/>
            <person name="Malfatti S."/>
            <person name="Larimer F."/>
            <person name="Copeland A."/>
            <person name="Detter J.C."/>
            <person name="Land M."/>
            <person name="Richardson P.M."/>
            <person name="Yu X.J."/>
            <person name="Walker D.H."/>
            <person name="McBride J.W."/>
            <person name="Kyrpides N.C."/>
        </authorList>
    </citation>
    <scope>NUCLEOTIDE SEQUENCE [LARGE SCALE GENOMIC DNA]</scope>
    <source>
        <strain>Jake</strain>
    </source>
</reference>
<feature type="chain" id="PRO_1000020258" description="1-deoxy-D-xylulose 5-phosphate reductoisomerase">
    <location>
        <begin position="1"/>
        <end position="387"/>
    </location>
</feature>
<feature type="binding site" evidence="1">
    <location>
        <position position="10"/>
    </location>
    <ligand>
        <name>NADPH</name>
        <dbReference type="ChEBI" id="CHEBI:57783"/>
    </ligand>
</feature>
<feature type="binding site" evidence="1">
    <location>
        <position position="11"/>
    </location>
    <ligand>
        <name>NADPH</name>
        <dbReference type="ChEBI" id="CHEBI:57783"/>
    </ligand>
</feature>
<feature type="binding site" evidence="1">
    <location>
        <position position="13"/>
    </location>
    <ligand>
        <name>NADPH</name>
        <dbReference type="ChEBI" id="CHEBI:57783"/>
    </ligand>
</feature>
<feature type="binding site" evidence="1">
    <location>
        <position position="38"/>
    </location>
    <ligand>
        <name>NADPH</name>
        <dbReference type="ChEBI" id="CHEBI:57783"/>
    </ligand>
</feature>
<feature type="binding site" evidence="1">
    <location>
        <position position="122"/>
    </location>
    <ligand>
        <name>NADPH</name>
        <dbReference type="ChEBI" id="CHEBI:57783"/>
    </ligand>
</feature>
<feature type="binding site" evidence="1">
    <location>
        <position position="123"/>
    </location>
    <ligand>
        <name>1-deoxy-D-xylulose 5-phosphate</name>
        <dbReference type="ChEBI" id="CHEBI:57792"/>
    </ligand>
</feature>
<feature type="binding site" evidence="1">
    <location>
        <position position="124"/>
    </location>
    <ligand>
        <name>NADPH</name>
        <dbReference type="ChEBI" id="CHEBI:57783"/>
    </ligand>
</feature>
<feature type="binding site" evidence="1">
    <location>
        <position position="148"/>
    </location>
    <ligand>
        <name>Mn(2+)</name>
        <dbReference type="ChEBI" id="CHEBI:29035"/>
    </ligand>
</feature>
<feature type="binding site" evidence="1">
    <location>
        <position position="149"/>
    </location>
    <ligand>
        <name>1-deoxy-D-xylulose 5-phosphate</name>
        <dbReference type="ChEBI" id="CHEBI:57792"/>
    </ligand>
</feature>
<feature type="binding site" evidence="1">
    <location>
        <position position="150"/>
    </location>
    <ligand>
        <name>1-deoxy-D-xylulose 5-phosphate</name>
        <dbReference type="ChEBI" id="CHEBI:57792"/>
    </ligand>
</feature>
<feature type="binding site" evidence="1">
    <location>
        <position position="150"/>
    </location>
    <ligand>
        <name>Mn(2+)</name>
        <dbReference type="ChEBI" id="CHEBI:29035"/>
    </ligand>
</feature>
<feature type="binding site" evidence="1">
    <location>
        <position position="174"/>
    </location>
    <ligand>
        <name>1-deoxy-D-xylulose 5-phosphate</name>
        <dbReference type="ChEBI" id="CHEBI:57792"/>
    </ligand>
</feature>
<feature type="binding site" evidence="1">
    <location>
        <position position="197"/>
    </location>
    <ligand>
        <name>1-deoxy-D-xylulose 5-phosphate</name>
        <dbReference type="ChEBI" id="CHEBI:57792"/>
    </ligand>
</feature>
<feature type="binding site" evidence="1">
    <location>
        <position position="203"/>
    </location>
    <ligand>
        <name>NADPH</name>
        <dbReference type="ChEBI" id="CHEBI:57783"/>
    </ligand>
</feature>
<feature type="binding site" evidence="1">
    <location>
        <position position="210"/>
    </location>
    <ligand>
        <name>1-deoxy-D-xylulose 5-phosphate</name>
        <dbReference type="ChEBI" id="CHEBI:57792"/>
    </ligand>
</feature>
<feature type="binding site" evidence="1">
    <location>
        <position position="215"/>
    </location>
    <ligand>
        <name>1-deoxy-D-xylulose 5-phosphate</name>
        <dbReference type="ChEBI" id="CHEBI:57792"/>
    </ligand>
</feature>
<feature type="binding site" evidence="1">
    <location>
        <position position="216"/>
    </location>
    <ligand>
        <name>1-deoxy-D-xylulose 5-phosphate</name>
        <dbReference type="ChEBI" id="CHEBI:57792"/>
    </ligand>
</feature>
<feature type="binding site" evidence="1">
    <location>
        <position position="219"/>
    </location>
    <ligand>
        <name>1-deoxy-D-xylulose 5-phosphate</name>
        <dbReference type="ChEBI" id="CHEBI:57792"/>
    </ligand>
</feature>
<feature type="binding site" evidence="1">
    <location>
        <position position="219"/>
    </location>
    <ligand>
        <name>Mn(2+)</name>
        <dbReference type="ChEBI" id="CHEBI:29035"/>
    </ligand>
</feature>
<organism>
    <name type="scientific">Ehrlichia canis (strain Jake)</name>
    <dbReference type="NCBI Taxonomy" id="269484"/>
    <lineage>
        <taxon>Bacteria</taxon>
        <taxon>Pseudomonadati</taxon>
        <taxon>Pseudomonadota</taxon>
        <taxon>Alphaproteobacteria</taxon>
        <taxon>Rickettsiales</taxon>
        <taxon>Anaplasmataceae</taxon>
        <taxon>Ehrlichia</taxon>
    </lineage>
</organism>
<evidence type="ECO:0000255" key="1">
    <source>
        <dbReference type="HAMAP-Rule" id="MF_00183"/>
    </source>
</evidence>
<keyword id="KW-0414">Isoprene biosynthesis</keyword>
<keyword id="KW-0464">Manganese</keyword>
<keyword id="KW-0479">Metal-binding</keyword>
<keyword id="KW-0521">NADP</keyword>
<keyword id="KW-0560">Oxidoreductase</keyword>